<accession>P12637</accession>
<comment type="function">
    <text evidence="5 7 9">Calsequestrin is a high-capacity, moderate affinity, calcium-binding protein and thus acts as an internal calcium store in muscle (PubMed:3427023). Calcium ions are bound by clusters of acidic residues at the protein surface, especially at the interface between subunits. Can bind around 60 Ca(2+) ions. Regulates the release of lumenal Ca(2+) via the calcium release channel RYR2; this plays an important role in triggering muscle contraction. Plays a role in excitation-contraction coupling in the heart and in regulating the rate of heart beats.</text>
</comment>
<comment type="subunit">
    <text evidence="2 5 7">Interacts with ASPH (By similarity). Monomer, homodimer and homooligomer. Mostly monomeric in the absence of calcium. Forms higher oligomers in a calcium-dependent manner. Dimers associate to form tetramers, that then form linear homomer chains. Interacts with TRDN.</text>
</comment>
<comment type="subcellular location">
    <subcellularLocation>
        <location evidence="1">Sarcoplasmic reticulum lumen</location>
    </subcellularLocation>
    <text evidence="1">This isoform of calsequestrin occurs in the sarcoplasmic reticulum's terminal cisternae luminal spaces of cardiac and slow skeletal muscle cells.</text>
</comment>
<comment type="tissue specificity">
    <text evidence="9">Detected in heart muscle (at protein level).</text>
</comment>
<comment type="PTM">
    <text evidence="2">Phosphorylation in the C-terminus, probably by CK2, moderately increases calcium buffering capacity.</text>
</comment>
<comment type="PTM">
    <text evidence="7 8">N-glycosylated.</text>
</comment>
<comment type="similarity">
    <text evidence="10">Belongs to the calsequestrin family.</text>
</comment>
<keyword id="KW-0002">3D-structure</keyword>
<keyword id="KW-0106">Calcium</keyword>
<keyword id="KW-0903">Direct protein sequencing</keyword>
<keyword id="KW-0325">Glycoprotein</keyword>
<keyword id="KW-0479">Metal-binding</keyword>
<keyword id="KW-0514">Muscle protein</keyword>
<keyword id="KW-0597">Phosphoprotein</keyword>
<keyword id="KW-1185">Reference proteome</keyword>
<keyword id="KW-0703">Sarcoplasmic reticulum</keyword>
<keyword id="KW-0732">Signal</keyword>
<gene>
    <name type="primary">CASQ2</name>
</gene>
<dbReference type="EMBL" id="J03766">
    <property type="protein sequence ID" value="AAA30833.1"/>
    <property type="molecule type" value="mRNA"/>
</dbReference>
<dbReference type="PIR" id="A28071">
    <property type="entry name" value="A28071"/>
</dbReference>
<dbReference type="PIR" id="A39040">
    <property type="entry name" value="A39040"/>
</dbReference>
<dbReference type="RefSeq" id="NP_001300745.1">
    <property type="nucleotide sequence ID" value="NM_001313816.2"/>
</dbReference>
<dbReference type="PDB" id="1SJI">
    <property type="method" value="X-ray"/>
    <property type="resolution" value="2.40 A"/>
    <property type="chains" value="A/B=22-371"/>
</dbReference>
<dbReference type="PDBsum" id="1SJI"/>
<dbReference type="SMR" id="P12637"/>
<dbReference type="CORUM" id="P12637"/>
<dbReference type="FunCoup" id="P12637">
    <property type="interactions" value="23"/>
</dbReference>
<dbReference type="STRING" id="9615.ENSCAFP00000051055"/>
<dbReference type="GlyCosmos" id="P12637">
    <property type="glycosylation" value="2 sites, No reported glycans"/>
</dbReference>
<dbReference type="iPTMnet" id="P12637"/>
<dbReference type="PaxDb" id="9612-ENSCAFP00000014348"/>
<dbReference type="GeneID" id="483134"/>
<dbReference type="KEGG" id="cfa:483134"/>
<dbReference type="CTD" id="845"/>
<dbReference type="eggNOG" id="ENOG502QU4Q">
    <property type="taxonomic scope" value="Eukaryota"/>
</dbReference>
<dbReference type="InParanoid" id="P12637"/>
<dbReference type="OrthoDB" id="10038131at2759"/>
<dbReference type="EvolutionaryTrace" id="P12637"/>
<dbReference type="Proteomes" id="UP000002254">
    <property type="component" value="Unplaced"/>
</dbReference>
<dbReference type="Proteomes" id="UP000694429">
    <property type="component" value="Unplaced"/>
</dbReference>
<dbReference type="Proteomes" id="UP000694542">
    <property type="component" value="Unplaced"/>
</dbReference>
<dbReference type="Proteomes" id="UP000805418">
    <property type="component" value="Unplaced"/>
</dbReference>
<dbReference type="GO" id="GO:0016529">
    <property type="term" value="C:sarcoplasmic reticulum"/>
    <property type="evidence" value="ECO:0000314"/>
    <property type="project" value="BHF-UCL"/>
</dbReference>
<dbReference type="GO" id="GO:0033018">
    <property type="term" value="C:sarcoplasmic reticulum lumen"/>
    <property type="evidence" value="ECO:0000318"/>
    <property type="project" value="GO_Central"/>
</dbReference>
<dbReference type="GO" id="GO:0030018">
    <property type="term" value="C:Z disc"/>
    <property type="evidence" value="ECO:0000318"/>
    <property type="project" value="GO_Central"/>
</dbReference>
<dbReference type="GO" id="GO:0005509">
    <property type="term" value="F:calcium ion binding"/>
    <property type="evidence" value="ECO:0000318"/>
    <property type="project" value="GO_Central"/>
</dbReference>
<dbReference type="GO" id="GO:0010881">
    <property type="term" value="P:regulation of cardiac muscle contraction by regulation of the release of sequestered calcium ion"/>
    <property type="evidence" value="ECO:0000314"/>
    <property type="project" value="BHF-UCL"/>
</dbReference>
<dbReference type="GO" id="GO:0010880">
    <property type="term" value="P:regulation of release of sequestered calcium ion into cytosol by sarcoplasmic reticulum"/>
    <property type="evidence" value="ECO:0000314"/>
    <property type="project" value="BHF-UCL"/>
</dbReference>
<dbReference type="CDD" id="cd03074">
    <property type="entry name" value="PDI_b'_Calsequestrin_C"/>
    <property type="match status" value="1"/>
</dbReference>
<dbReference type="CDD" id="cd03066">
    <property type="entry name" value="PDI_b_Calsequestrin_middle"/>
    <property type="match status" value="1"/>
</dbReference>
<dbReference type="CDD" id="cd03065">
    <property type="entry name" value="PDI_b_Calsequestrin_N"/>
    <property type="match status" value="1"/>
</dbReference>
<dbReference type="FunFam" id="3.40.30.10:FF:000031">
    <property type="entry name" value="Calsequestrin"/>
    <property type="match status" value="1"/>
</dbReference>
<dbReference type="FunFam" id="3.40.30.10:FF:000033">
    <property type="entry name" value="Calsequestrin"/>
    <property type="match status" value="1"/>
</dbReference>
<dbReference type="FunFam" id="3.40.30.10:FF:000047">
    <property type="entry name" value="Calsequestrin"/>
    <property type="match status" value="1"/>
</dbReference>
<dbReference type="Gene3D" id="3.40.30.10">
    <property type="entry name" value="Glutaredoxin"/>
    <property type="match status" value="3"/>
</dbReference>
<dbReference type="InterPro" id="IPR001393">
    <property type="entry name" value="Calsequestrin"/>
</dbReference>
<dbReference type="InterPro" id="IPR041860">
    <property type="entry name" value="Calsequestrin_C"/>
</dbReference>
<dbReference type="InterPro" id="IPR018233">
    <property type="entry name" value="Calsequestrin_CS"/>
</dbReference>
<dbReference type="InterPro" id="IPR041858">
    <property type="entry name" value="Calsequestrin_middle_dom"/>
</dbReference>
<dbReference type="InterPro" id="IPR041859">
    <property type="entry name" value="Calsequestrin_N"/>
</dbReference>
<dbReference type="InterPro" id="IPR036249">
    <property type="entry name" value="Thioredoxin-like_sf"/>
</dbReference>
<dbReference type="PANTHER" id="PTHR10033">
    <property type="entry name" value="CALSEQUESTRIN"/>
    <property type="match status" value="1"/>
</dbReference>
<dbReference type="PANTHER" id="PTHR10033:SF15">
    <property type="entry name" value="CALSEQUESTRIN-2"/>
    <property type="match status" value="1"/>
</dbReference>
<dbReference type="Pfam" id="PF01216">
    <property type="entry name" value="Calsequestrin"/>
    <property type="match status" value="1"/>
</dbReference>
<dbReference type="PRINTS" id="PR00312">
    <property type="entry name" value="CALSEQUESTRN"/>
</dbReference>
<dbReference type="SUPFAM" id="SSF52833">
    <property type="entry name" value="Thioredoxin-like"/>
    <property type="match status" value="3"/>
</dbReference>
<dbReference type="PROSITE" id="PS00863">
    <property type="entry name" value="CALSEQUESTRIN_1"/>
    <property type="match status" value="1"/>
</dbReference>
<dbReference type="PROSITE" id="PS00864">
    <property type="entry name" value="CALSEQUESTRIN_2"/>
    <property type="match status" value="1"/>
</dbReference>
<reference key="1">
    <citation type="journal article" date="1988" name="J. Biol. Chem.">
        <title>Complete amino acid sequence of canine cardiac calsequestrin deduced by cDNA cloning.</title>
        <authorList>
            <person name="Scott B.T."/>
            <person name="Simmerman H.K.B."/>
            <person name="Collins J.H."/>
            <person name="Nadal-Ginard B."/>
            <person name="Jones L.R."/>
        </authorList>
    </citation>
    <scope>NUCLEOTIDE SEQUENCE [MRNA]</scope>
    <source>
        <tissue>Heart</tissue>
    </source>
</reference>
<reference key="2">
    <citation type="journal article" date="1987" name="Biochemistry">
        <title>Characterization of cardiac calsequestrin.</title>
        <authorList>
            <person name="Slupsky J.R."/>
            <person name="Ohnishi M."/>
            <person name="Carpenter M.R."/>
            <person name="Reithmeier R.A.F."/>
        </authorList>
    </citation>
    <scope>PROTEIN SEQUENCE OF 20-71</scope>
    <scope>FUNCTION</scope>
    <scope>TISSUE SPECIFICITY</scope>
    <source>
        <tissue>Heart</tissue>
    </source>
</reference>
<reference key="3">
    <citation type="journal article" date="1991" name="J. Biol. Chem.">
        <title>Phosphorylation of cardiac and skeletal muscle calsequestrin isoforms by casein kinase II. Demonstration of a cluster of unique rapidly phosphorylated sites in cardiac calsequestrin.</title>
        <authorList>
            <person name="Cala S.E."/>
            <person name="Jones L.R."/>
        </authorList>
    </citation>
    <scope>PHOSPHORYLATION AT SER-397; SER-401 AND SER-405 BY CK2</scope>
</reference>
<reference key="4">
    <citation type="journal article" date="2010" name="J. Mol. Cell. Cardiol.">
        <title>The human CASQ2 mutation K206N is associated with hyperglycosylation and altered cellular calcium handling.</title>
        <authorList>
            <person name="Kirchhefer U."/>
            <person name="Wehrmeister D."/>
            <person name="Postma A.V."/>
            <person name="Pohlentz G."/>
            <person name="Mormann M."/>
            <person name="Kucerova D."/>
            <person name="Muller F.U."/>
            <person name="Schmitz W."/>
            <person name="Schulze-Bahr E."/>
            <person name="Wilde A.A."/>
            <person name="Neumann J."/>
        </authorList>
    </citation>
    <scope>FUNCTION</scope>
    <scope>MUTAGENESIS OF LYS-206</scope>
    <scope>GLYCOSYLATION</scope>
    <scope>INTERACTION WITH TRDN</scope>
</reference>
<reference key="5">
    <citation type="journal article" date="2011" name="Mol. Cell. Biochem.">
        <title>The cytosolic protein kinase CK2 phosphorylates cardiac calsequestrin in intact cells.</title>
        <authorList>
            <person name="McFarland T.P."/>
            <person name="Sleiman N.H."/>
            <person name="Yaeger D.B."/>
            <person name="Cala S.E."/>
        </authorList>
    </citation>
    <scope>GLYCOSYLATION</scope>
</reference>
<reference key="6">
    <citation type="journal article" date="2004" name="J. Biol. Chem.">
        <title>Comparing skeletal and cardiac calsequestrin structures and their calcium binding: a proposed mechanism for coupled calcium binding and protein polymerization.</title>
        <authorList>
            <person name="Park H."/>
            <person name="Park I.Y."/>
            <person name="Kim E."/>
            <person name="Youn B."/>
            <person name="Fields K."/>
            <person name="Dunker A.K."/>
            <person name="Kang C."/>
        </authorList>
    </citation>
    <scope>X-RAY CRYSTALLOGRAPHY (2.4 ANGSTROMS) OF 22-371</scope>
    <scope>FUNCTION</scope>
    <scope>SUBUNIT</scope>
    <scope>CALCIUM AFFINITY</scope>
</reference>
<evidence type="ECO:0000250" key="1">
    <source>
        <dbReference type="UniProtKB" id="O09161"/>
    </source>
</evidence>
<evidence type="ECO:0000250" key="2">
    <source>
        <dbReference type="UniProtKB" id="O14958"/>
    </source>
</evidence>
<evidence type="ECO:0000255" key="3"/>
<evidence type="ECO:0000256" key="4">
    <source>
        <dbReference type="SAM" id="MobiDB-lite"/>
    </source>
</evidence>
<evidence type="ECO:0000269" key="5">
    <source>
    </source>
</evidence>
<evidence type="ECO:0000269" key="6">
    <source>
    </source>
</evidence>
<evidence type="ECO:0000269" key="7">
    <source>
    </source>
</evidence>
<evidence type="ECO:0000269" key="8">
    <source>
    </source>
</evidence>
<evidence type="ECO:0000269" key="9">
    <source>
    </source>
</evidence>
<evidence type="ECO:0000305" key="10"/>
<evidence type="ECO:0007829" key="11">
    <source>
        <dbReference type="PDB" id="1SJI"/>
    </source>
</evidence>
<proteinExistence type="evidence at protein level"/>
<sequence length="410" mass="47417">MKRTHLFIAGLYLLASCRAEEGLNFPTYDGKDRVVSLTEKNFKQVLKKYDVLCLYYHESVSSDKVAQKQFQLKEIVLELVAQVLEHKDIGFVMVDAKKEAKLAKKLGFDEEGSLYVLKGDRTIEFDGEFAADVLVEFLLDLIEDPVEIINSKLEVQAFERIEDQIKLIGFFKSEESEYYKAFEEAAEHFQPYIKFFATFDKGVAKKLSLKMNEVDFYEPFMDEPIAIPDKPYTEEELVEFVKEHQRPTLRRLRPEDMFETWEDDLNGIHIVAFAERSDPDGYEFLEILKQVARDNTDNPDLSIVWIDPDDFPLLVAYWEKTFKIDLFKPQIGVVNVTDADSVWMEIPDDDDLPTAEELEDWIEDVLSGKINTEDDDNEEGDDGDDDEDDDDDDGNNSDEESNDDSDDDDE</sequence>
<organism>
    <name type="scientific">Canis lupus familiaris</name>
    <name type="common">Dog</name>
    <name type="synonym">Canis familiaris</name>
    <dbReference type="NCBI Taxonomy" id="9615"/>
    <lineage>
        <taxon>Eukaryota</taxon>
        <taxon>Metazoa</taxon>
        <taxon>Chordata</taxon>
        <taxon>Craniata</taxon>
        <taxon>Vertebrata</taxon>
        <taxon>Euteleostomi</taxon>
        <taxon>Mammalia</taxon>
        <taxon>Eutheria</taxon>
        <taxon>Laurasiatheria</taxon>
        <taxon>Carnivora</taxon>
        <taxon>Caniformia</taxon>
        <taxon>Canidae</taxon>
        <taxon>Canis</taxon>
    </lineage>
</organism>
<feature type="signal peptide" evidence="9">
    <location>
        <begin position="1"/>
        <end position="19"/>
    </location>
</feature>
<feature type="chain" id="PRO_0000004217" description="Calsequestrin-2">
    <location>
        <begin position="20"/>
        <end position="410"/>
    </location>
</feature>
<feature type="region of interest" description="Calcium regulated hydrophobic site">
    <location>
        <begin position="221"/>
        <end position="242"/>
    </location>
</feature>
<feature type="region of interest" description="Disordered" evidence="4">
    <location>
        <begin position="364"/>
        <end position="410"/>
    </location>
</feature>
<feature type="compositionally biased region" description="Acidic residues" evidence="4">
    <location>
        <begin position="373"/>
        <end position="410"/>
    </location>
</feature>
<feature type="modified residue" description="Phosphotyrosine" evidence="1">
    <location>
        <position position="282"/>
    </location>
</feature>
<feature type="modified residue" description="Phosphoserine; by CK2" evidence="6">
    <location>
        <position position="397"/>
    </location>
</feature>
<feature type="modified residue" description="Phosphoserine; by CK2" evidence="6">
    <location>
        <position position="401"/>
    </location>
</feature>
<feature type="modified residue" description="Phosphoserine; by CK2" evidence="6">
    <location>
        <position position="405"/>
    </location>
</feature>
<feature type="glycosylation site" description="N-linked (GlcNAc...) asparagine" evidence="3">
    <location>
        <position position="335"/>
    </location>
</feature>
<feature type="glycosylation site" description="N-linked (GlcNAc...) asparagine" evidence="3">
    <location>
        <position position="395"/>
    </location>
</feature>
<feature type="mutagenesis site" description="Creates an additional N-glycosylation site. Decreases calcium binding and increases the rate of spontaneous Ca(2+) release from myocytes." evidence="7">
    <original>K</original>
    <variation>N</variation>
    <location>
        <position position="206"/>
    </location>
</feature>
<feature type="sequence conflict" description="In Ref. 2; AA sequence." evidence="10" ref="2">
    <original>Q</original>
    <variation>E</variation>
    <location>
        <position position="71"/>
    </location>
</feature>
<feature type="strand" evidence="11">
    <location>
        <begin position="35"/>
        <end position="37"/>
    </location>
</feature>
<feature type="helix" evidence="11">
    <location>
        <begin position="39"/>
        <end position="46"/>
    </location>
</feature>
<feature type="strand" evidence="11">
    <location>
        <begin position="50"/>
        <end position="57"/>
    </location>
</feature>
<feature type="strand" evidence="11">
    <location>
        <begin position="62"/>
        <end position="64"/>
    </location>
</feature>
<feature type="helix" evidence="11">
    <location>
        <begin position="68"/>
        <end position="83"/>
    </location>
</feature>
<feature type="helix" evidence="11">
    <location>
        <begin position="84"/>
        <end position="86"/>
    </location>
</feature>
<feature type="strand" evidence="11">
    <location>
        <begin position="87"/>
        <end position="95"/>
    </location>
</feature>
<feature type="turn" evidence="11">
    <location>
        <begin position="96"/>
        <end position="99"/>
    </location>
</feature>
<feature type="helix" evidence="11">
    <location>
        <begin position="100"/>
        <end position="106"/>
    </location>
</feature>
<feature type="strand" evidence="11">
    <location>
        <begin position="113"/>
        <end position="118"/>
    </location>
</feature>
<feature type="strand" evidence="11">
    <location>
        <begin position="121"/>
        <end position="125"/>
    </location>
</feature>
<feature type="helix" evidence="11">
    <location>
        <begin position="131"/>
        <end position="139"/>
    </location>
</feature>
<feature type="strand" evidence="11">
    <location>
        <begin position="145"/>
        <end position="148"/>
    </location>
</feature>
<feature type="helix" evidence="11">
    <location>
        <begin position="152"/>
        <end position="160"/>
    </location>
</feature>
<feature type="strand" evidence="11">
    <location>
        <begin position="166"/>
        <end position="170"/>
    </location>
</feature>
<feature type="helix" evidence="11">
    <location>
        <begin position="177"/>
        <end position="188"/>
    </location>
</feature>
<feature type="turn" evidence="11">
    <location>
        <begin position="189"/>
        <end position="192"/>
    </location>
</feature>
<feature type="strand" evidence="11">
    <location>
        <begin position="193"/>
        <end position="198"/>
    </location>
</feature>
<feature type="helix" evidence="11">
    <location>
        <begin position="201"/>
        <end position="207"/>
    </location>
</feature>
<feature type="strand" evidence="11">
    <location>
        <begin position="214"/>
        <end position="217"/>
    </location>
</feature>
<feature type="strand" evidence="11">
    <location>
        <begin position="228"/>
        <end position="231"/>
    </location>
</feature>
<feature type="helix" evidence="11">
    <location>
        <begin position="234"/>
        <end position="244"/>
    </location>
</feature>
<feature type="strand" evidence="11">
    <location>
        <begin position="248"/>
        <end position="251"/>
    </location>
</feature>
<feature type="turn" evidence="11">
    <location>
        <begin position="254"/>
        <end position="256"/>
    </location>
</feature>
<feature type="helix" evidence="11">
    <location>
        <begin position="257"/>
        <end position="262"/>
    </location>
</feature>
<feature type="strand" evidence="11">
    <location>
        <begin position="265"/>
        <end position="273"/>
    </location>
</feature>
<feature type="helix" evidence="11">
    <location>
        <begin position="279"/>
        <end position="294"/>
    </location>
</feature>
<feature type="helix" evidence="11">
    <location>
        <begin position="295"/>
        <end position="297"/>
    </location>
</feature>
<feature type="strand" evidence="11">
    <location>
        <begin position="303"/>
        <end position="306"/>
    </location>
</feature>
<feature type="helix" evidence="11">
    <location>
        <begin position="308"/>
        <end position="310"/>
    </location>
</feature>
<feature type="helix" evidence="11">
    <location>
        <begin position="312"/>
        <end position="321"/>
    </location>
</feature>
<feature type="strand" evidence="11">
    <location>
        <begin position="330"/>
        <end position="339"/>
    </location>
</feature>
<feature type="strand" evidence="11">
    <location>
        <begin position="341"/>
        <end position="344"/>
    </location>
</feature>
<feature type="helix" evidence="11">
    <location>
        <begin position="355"/>
        <end position="366"/>
    </location>
</feature>
<protein>
    <recommendedName>
        <fullName>Calsequestrin-2</fullName>
    </recommendedName>
    <alternativeName>
        <fullName>Calsequestrin, cardiac muscle isoform</fullName>
    </alternativeName>
</protein>
<name>CASQ2_CANLF</name>